<evidence type="ECO:0000255" key="1">
    <source>
        <dbReference type="HAMAP-Rule" id="MF_01846"/>
    </source>
</evidence>
<organism>
    <name type="scientific">Salmonella enteritidis PT4 (strain P125109)</name>
    <dbReference type="NCBI Taxonomy" id="550537"/>
    <lineage>
        <taxon>Bacteria</taxon>
        <taxon>Pseudomonadati</taxon>
        <taxon>Pseudomonadota</taxon>
        <taxon>Gammaproteobacteria</taxon>
        <taxon>Enterobacterales</taxon>
        <taxon>Enterobacteriaceae</taxon>
        <taxon>Salmonella</taxon>
    </lineage>
</organism>
<dbReference type="EC" id="3.6.1.9" evidence="1"/>
<dbReference type="EC" id="3.6.1.12" evidence="1"/>
<dbReference type="EC" id="3.6.1.-" evidence="1"/>
<dbReference type="EC" id="3.6.1.23" evidence="1"/>
<dbReference type="EMBL" id="AM933172">
    <property type="protein sequence ID" value="CAR33861.1"/>
    <property type="molecule type" value="Genomic_DNA"/>
</dbReference>
<dbReference type="RefSeq" id="WP_001249902.1">
    <property type="nucleotide sequence ID" value="NC_011294.1"/>
</dbReference>
<dbReference type="SMR" id="B5R268"/>
<dbReference type="KEGG" id="set:SEN2277"/>
<dbReference type="HOGENOM" id="CLU_037162_31_0_6"/>
<dbReference type="Proteomes" id="UP000000613">
    <property type="component" value="Chromosome"/>
</dbReference>
<dbReference type="GO" id="GO:0047840">
    <property type="term" value="F:dCTP diphosphatase activity"/>
    <property type="evidence" value="ECO:0007669"/>
    <property type="project" value="UniProtKB-EC"/>
</dbReference>
<dbReference type="GO" id="GO:0036218">
    <property type="term" value="F:dTTP diphosphatase activity"/>
    <property type="evidence" value="ECO:0007669"/>
    <property type="project" value="RHEA"/>
</dbReference>
<dbReference type="GO" id="GO:0004170">
    <property type="term" value="F:dUTP diphosphatase activity"/>
    <property type="evidence" value="ECO:0007669"/>
    <property type="project" value="UniProtKB-EC"/>
</dbReference>
<dbReference type="GO" id="GO:0000287">
    <property type="term" value="F:magnesium ion binding"/>
    <property type="evidence" value="ECO:0007669"/>
    <property type="project" value="UniProtKB-UniRule"/>
</dbReference>
<dbReference type="CDD" id="cd04696">
    <property type="entry name" value="NUDIX_NudI"/>
    <property type="match status" value="1"/>
</dbReference>
<dbReference type="Gene3D" id="3.90.79.10">
    <property type="entry name" value="Nucleoside Triphosphate Pyrophosphohydrolase"/>
    <property type="match status" value="1"/>
</dbReference>
<dbReference type="HAMAP" id="MF_01846">
    <property type="entry name" value="Nudix_NudI"/>
    <property type="match status" value="1"/>
</dbReference>
<dbReference type="InterPro" id="IPR023781">
    <property type="entry name" value="Nucleoside_triphosphatase_NudI"/>
</dbReference>
<dbReference type="InterPro" id="IPR020476">
    <property type="entry name" value="Nudix_hydrolase"/>
</dbReference>
<dbReference type="InterPro" id="IPR015797">
    <property type="entry name" value="NUDIX_hydrolase-like_dom_sf"/>
</dbReference>
<dbReference type="InterPro" id="IPR020084">
    <property type="entry name" value="NUDIX_hydrolase_CS"/>
</dbReference>
<dbReference type="InterPro" id="IPR000086">
    <property type="entry name" value="NUDIX_hydrolase_dom"/>
</dbReference>
<dbReference type="NCBIfam" id="NF012016">
    <property type="entry name" value="PRK15472.1"/>
    <property type="match status" value="1"/>
</dbReference>
<dbReference type="PANTHER" id="PTHR43046">
    <property type="entry name" value="GDP-MANNOSE MANNOSYL HYDROLASE"/>
    <property type="match status" value="1"/>
</dbReference>
<dbReference type="PANTHER" id="PTHR43046:SF14">
    <property type="entry name" value="MUTT_NUDIX FAMILY PROTEIN"/>
    <property type="match status" value="1"/>
</dbReference>
<dbReference type="Pfam" id="PF00293">
    <property type="entry name" value="NUDIX"/>
    <property type="match status" value="1"/>
</dbReference>
<dbReference type="PRINTS" id="PR00502">
    <property type="entry name" value="NUDIXFAMILY"/>
</dbReference>
<dbReference type="SUPFAM" id="SSF55811">
    <property type="entry name" value="Nudix"/>
    <property type="match status" value="1"/>
</dbReference>
<dbReference type="PROSITE" id="PS51462">
    <property type="entry name" value="NUDIX"/>
    <property type="match status" value="1"/>
</dbReference>
<dbReference type="PROSITE" id="PS00893">
    <property type="entry name" value="NUDIX_BOX"/>
    <property type="match status" value="1"/>
</dbReference>
<feature type="chain" id="PRO_1000188488" description="Nucleoside triphosphatase NudI">
    <location>
        <begin position="1"/>
        <end position="141"/>
    </location>
</feature>
<feature type="domain" description="Nudix hydrolase" evidence="1">
    <location>
        <begin position="1"/>
        <end position="141"/>
    </location>
</feature>
<feature type="short sequence motif" description="Nudix box">
    <location>
        <begin position="38"/>
        <end position="59"/>
    </location>
</feature>
<name>NUDI_SALEP</name>
<comment type="function">
    <text evidence="1">Catalyzes the hydrolysis of nucleoside triphosphates, with a preference for pyrimidine deoxynucleoside triphosphates (dUTP, dTTP and dCTP).</text>
</comment>
<comment type="catalytic activity">
    <reaction evidence="1">
        <text>a ribonucleoside 5'-triphosphate + H2O = a ribonucleoside 5'-phosphate + diphosphate + H(+)</text>
        <dbReference type="Rhea" id="RHEA:23996"/>
        <dbReference type="ChEBI" id="CHEBI:15377"/>
        <dbReference type="ChEBI" id="CHEBI:15378"/>
        <dbReference type="ChEBI" id="CHEBI:33019"/>
        <dbReference type="ChEBI" id="CHEBI:58043"/>
        <dbReference type="ChEBI" id="CHEBI:61557"/>
        <dbReference type="EC" id="3.6.1.9"/>
    </reaction>
</comment>
<comment type="catalytic activity">
    <reaction evidence="1">
        <text>a 2'-deoxyribonucleoside 5'-triphosphate + H2O = a 2'-deoxyribonucleoside 5'-phosphate + diphosphate + H(+)</text>
        <dbReference type="Rhea" id="RHEA:44644"/>
        <dbReference type="ChEBI" id="CHEBI:15377"/>
        <dbReference type="ChEBI" id="CHEBI:15378"/>
        <dbReference type="ChEBI" id="CHEBI:33019"/>
        <dbReference type="ChEBI" id="CHEBI:61560"/>
        <dbReference type="ChEBI" id="CHEBI:65317"/>
        <dbReference type="EC" id="3.6.1.9"/>
    </reaction>
</comment>
<comment type="catalytic activity">
    <reaction evidence="1">
        <text>dUTP + H2O = dUMP + diphosphate + H(+)</text>
        <dbReference type="Rhea" id="RHEA:10248"/>
        <dbReference type="ChEBI" id="CHEBI:15377"/>
        <dbReference type="ChEBI" id="CHEBI:15378"/>
        <dbReference type="ChEBI" id="CHEBI:33019"/>
        <dbReference type="ChEBI" id="CHEBI:61555"/>
        <dbReference type="ChEBI" id="CHEBI:246422"/>
        <dbReference type="EC" id="3.6.1.9"/>
    </reaction>
</comment>
<comment type="catalytic activity">
    <reaction evidence="1">
        <text>dUTP + H2O = dUMP + diphosphate + H(+)</text>
        <dbReference type="Rhea" id="RHEA:10248"/>
        <dbReference type="ChEBI" id="CHEBI:15377"/>
        <dbReference type="ChEBI" id="CHEBI:15378"/>
        <dbReference type="ChEBI" id="CHEBI:33019"/>
        <dbReference type="ChEBI" id="CHEBI:61555"/>
        <dbReference type="ChEBI" id="CHEBI:246422"/>
        <dbReference type="EC" id="3.6.1.23"/>
    </reaction>
</comment>
<comment type="catalytic activity">
    <reaction evidence="1">
        <text>dTTP + H2O = dTMP + diphosphate + H(+)</text>
        <dbReference type="Rhea" id="RHEA:28534"/>
        <dbReference type="ChEBI" id="CHEBI:15377"/>
        <dbReference type="ChEBI" id="CHEBI:15378"/>
        <dbReference type="ChEBI" id="CHEBI:33019"/>
        <dbReference type="ChEBI" id="CHEBI:37568"/>
        <dbReference type="ChEBI" id="CHEBI:63528"/>
        <dbReference type="EC" id="3.6.1.9"/>
    </reaction>
</comment>
<comment type="catalytic activity">
    <reaction evidence="1">
        <text>dCTP + H2O = dCMP + diphosphate + H(+)</text>
        <dbReference type="Rhea" id="RHEA:22636"/>
        <dbReference type="ChEBI" id="CHEBI:15377"/>
        <dbReference type="ChEBI" id="CHEBI:15378"/>
        <dbReference type="ChEBI" id="CHEBI:33019"/>
        <dbReference type="ChEBI" id="CHEBI:57566"/>
        <dbReference type="ChEBI" id="CHEBI:61481"/>
        <dbReference type="EC" id="3.6.1.9"/>
    </reaction>
</comment>
<comment type="catalytic activity">
    <reaction evidence="1">
        <text>dCTP + H2O = dCMP + diphosphate + H(+)</text>
        <dbReference type="Rhea" id="RHEA:22636"/>
        <dbReference type="ChEBI" id="CHEBI:15377"/>
        <dbReference type="ChEBI" id="CHEBI:15378"/>
        <dbReference type="ChEBI" id="CHEBI:33019"/>
        <dbReference type="ChEBI" id="CHEBI:57566"/>
        <dbReference type="ChEBI" id="CHEBI:61481"/>
        <dbReference type="EC" id="3.6.1.12"/>
    </reaction>
</comment>
<comment type="cofactor">
    <cofactor evidence="1">
        <name>Mg(2+)</name>
        <dbReference type="ChEBI" id="CHEBI:18420"/>
    </cofactor>
</comment>
<comment type="subunit">
    <text evidence="1">Monomer.</text>
</comment>
<comment type="similarity">
    <text evidence="1">Belongs to the Nudix hydrolase family. NudI subfamily.</text>
</comment>
<reference key="1">
    <citation type="journal article" date="2008" name="Genome Res.">
        <title>Comparative genome analysis of Salmonella enteritidis PT4 and Salmonella gallinarum 287/91 provides insights into evolutionary and host adaptation pathways.</title>
        <authorList>
            <person name="Thomson N.R."/>
            <person name="Clayton D.J."/>
            <person name="Windhorst D."/>
            <person name="Vernikos G."/>
            <person name="Davidson S."/>
            <person name="Churcher C."/>
            <person name="Quail M.A."/>
            <person name="Stevens M."/>
            <person name="Jones M.A."/>
            <person name="Watson M."/>
            <person name="Barron A."/>
            <person name="Layton A."/>
            <person name="Pickard D."/>
            <person name="Kingsley R.A."/>
            <person name="Bignell A."/>
            <person name="Clark L."/>
            <person name="Harris B."/>
            <person name="Ormond D."/>
            <person name="Abdellah Z."/>
            <person name="Brooks K."/>
            <person name="Cherevach I."/>
            <person name="Chillingworth T."/>
            <person name="Woodward J."/>
            <person name="Norberczak H."/>
            <person name="Lord A."/>
            <person name="Arrowsmith C."/>
            <person name="Jagels K."/>
            <person name="Moule S."/>
            <person name="Mungall K."/>
            <person name="Saunders M."/>
            <person name="Whitehead S."/>
            <person name="Chabalgoity J.A."/>
            <person name="Maskell D."/>
            <person name="Humphreys T."/>
            <person name="Roberts M."/>
            <person name="Barrow P.A."/>
            <person name="Dougan G."/>
            <person name="Parkhill J."/>
        </authorList>
    </citation>
    <scope>NUCLEOTIDE SEQUENCE [LARGE SCALE GENOMIC DNA]</scope>
    <source>
        <strain>P125109</strain>
    </source>
</reference>
<accession>B5R268</accession>
<gene>
    <name evidence="1" type="primary">nudI</name>
    <name type="ordered locus">SEN2277</name>
</gene>
<sequence>MRQRTIVCPLIQNDGCYLLCKMADNRGVFPGQWALSGGGVEPGERIEEALRREIREELGEQLILSDITPWTFRDDIRVKTYADGRQEEIYMIYLIFDCVSANRDICINDEFQDYAWVKPEELALYDLNVATRHTLALKGLL</sequence>
<proteinExistence type="inferred from homology"/>
<keyword id="KW-0378">Hydrolase</keyword>
<keyword id="KW-0460">Magnesium</keyword>
<protein>
    <recommendedName>
        <fullName evidence="1">Nucleoside triphosphatase NudI</fullName>
        <ecNumber evidence="1">3.6.1.9</ecNumber>
    </recommendedName>
    <alternativeName>
        <fullName evidence="1">Nucleotide diphosphatase NudI</fullName>
    </alternativeName>
    <alternativeName>
        <fullName evidence="1">Pyrimidine deoxynucleoside triphosphate diphosphatase</fullName>
    </alternativeName>
    <alternativeName>
        <fullName evidence="1">dCTP diphosphatase</fullName>
        <ecNumber evidence="1">3.6.1.12</ecNumber>
    </alternativeName>
    <alternativeName>
        <fullName evidence="1">dTTP diphosphatase</fullName>
        <ecNumber evidence="1">3.6.1.-</ecNumber>
    </alternativeName>
    <alternativeName>
        <fullName evidence="1">dUTP diphosphatase</fullName>
        <ecNumber evidence="1">3.6.1.23</ecNumber>
    </alternativeName>
</protein>